<feature type="chain" id="PRO_1000099582" description="UvrABC system protein B">
    <location>
        <begin position="1"/>
        <end position="671"/>
    </location>
</feature>
<feature type="domain" description="Helicase ATP-binding" evidence="1">
    <location>
        <begin position="26"/>
        <end position="183"/>
    </location>
</feature>
<feature type="domain" description="Helicase C-terminal" evidence="1">
    <location>
        <begin position="431"/>
        <end position="593"/>
    </location>
</feature>
<feature type="domain" description="UVR" evidence="1">
    <location>
        <begin position="631"/>
        <end position="666"/>
    </location>
</feature>
<feature type="short sequence motif" description="Beta-hairpin">
    <location>
        <begin position="92"/>
        <end position="115"/>
    </location>
</feature>
<feature type="binding site" evidence="1">
    <location>
        <begin position="39"/>
        <end position="46"/>
    </location>
    <ligand>
        <name>ATP</name>
        <dbReference type="ChEBI" id="CHEBI:30616"/>
    </ligand>
</feature>
<dbReference type="EMBL" id="CP000901">
    <property type="protein sequence ID" value="ABX86091.1"/>
    <property type="molecule type" value="Genomic_DNA"/>
</dbReference>
<dbReference type="RefSeq" id="WP_002210767.1">
    <property type="nucleotide sequence ID" value="NZ_CP009935.1"/>
</dbReference>
<dbReference type="SMR" id="A9R3D3"/>
<dbReference type="GeneID" id="57977295"/>
<dbReference type="KEGG" id="ypg:YpAngola_A1430"/>
<dbReference type="PATRIC" id="fig|349746.12.peg.2396"/>
<dbReference type="GO" id="GO:0005737">
    <property type="term" value="C:cytoplasm"/>
    <property type="evidence" value="ECO:0007669"/>
    <property type="project" value="UniProtKB-SubCell"/>
</dbReference>
<dbReference type="GO" id="GO:0009380">
    <property type="term" value="C:excinuclease repair complex"/>
    <property type="evidence" value="ECO:0007669"/>
    <property type="project" value="InterPro"/>
</dbReference>
<dbReference type="GO" id="GO:0005524">
    <property type="term" value="F:ATP binding"/>
    <property type="evidence" value="ECO:0007669"/>
    <property type="project" value="UniProtKB-UniRule"/>
</dbReference>
<dbReference type="GO" id="GO:0016887">
    <property type="term" value="F:ATP hydrolysis activity"/>
    <property type="evidence" value="ECO:0007669"/>
    <property type="project" value="InterPro"/>
</dbReference>
<dbReference type="GO" id="GO:0003677">
    <property type="term" value="F:DNA binding"/>
    <property type="evidence" value="ECO:0007669"/>
    <property type="project" value="UniProtKB-UniRule"/>
</dbReference>
<dbReference type="GO" id="GO:0009381">
    <property type="term" value="F:excinuclease ABC activity"/>
    <property type="evidence" value="ECO:0007669"/>
    <property type="project" value="UniProtKB-UniRule"/>
</dbReference>
<dbReference type="GO" id="GO:0004386">
    <property type="term" value="F:helicase activity"/>
    <property type="evidence" value="ECO:0007669"/>
    <property type="project" value="UniProtKB-KW"/>
</dbReference>
<dbReference type="GO" id="GO:0006289">
    <property type="term" value="P:nucleotide-excision repair"/>
    <property type="evidence" value="ECO:0007669"/>
    <property type="project" value="UniProtKB-UniRule"/>
</dbReference>
<dbReference type="GO" id="GO:0009432">
    <property type="term" value="P:SOS response"/>
    <property type="evidence" value="ECO:0007669"/>
    <property type="project" value="UniProtKB-UniRule"/>
</dbReference>
<dbReference type="CDD" id="cd17916">
    <property type="entry name" value="DEXHc_UvrB"/>
    <property type="match status" value="1"/>
</dbReference>
<dbReference type="CDD" id="cd18790">
    <property type="entry name" value="SF2_C_UvrB"/>
    <property type="match status" value="1"/>
</dbReference>
<dbReference type="FunFam" id="3.40.50.300:FF:000257">
    <property type="entry name" value="UvrABC system protein B"/>
    <property type="match status" value="1"/>
</dbReference>
<dbReference type="FunFam" id="3.40.50.300:FF:000401">
    <property type="entry name" value="UvrABC system protein B"/>
    <property type="match status" value="1"/>
</dbReference>
<dbReference type="FunFam" id="3.40.50.300:FF:000477">
    <property type="entry name" value="UvrABC system protein B"/>
    <property type="match status" value="1"/>
</dbReference>
<dbReference type="Gene3D" id="3.40.50.300">
    <property type="entry name" value="P-loop containing nucleotide triphosphate hydrolases"/>
    <property type="match status" value="3"/>
</dbReference>
<dbReference type="Gene3D" id="4.10.860.10">
    <property type="entry name" value="UVR domain"/>
    <property type="match status" value="1"/>
</dbReference>
<dbReference type="HAMAP" id="MF_00204">
    <property type="entry name" value="UvrB"/>
    <property type="match status" value="1"/>
</dbReference>
<dbReference type="InterPro" id="IPR006935">
    <property type="entry name" value="Helicase/UvrB_N"/>
</dbReference>
<dbReference type="InterPro" id="IPR014001">
    <property type="entry name" value="Helicase_ATP-bd"/>
</dbReference>
<dbReference type="InterPro" id="IPR001650">
    <property type="entry name" value="Helicase_C-like"/>
</dbReference>
<dbReference type="InterPro" id="IPR027417">
    <property type="entry name" value="P-loop_NTPase"/>
</dbReference>
<dbReference type="InterPro" id="IPR001943">
    <property type="entry name" value="UVR_dom"/>
</dbReference>
<dbReference type="InterPro" id="IPR036876">
    <property type="entry name" value="UVR_dom_sf"/>
</dbReference>
<dbReference type="InterPro" id="IPR004807">
    <property type="entry name" value="UvrB"/>
</dbReference>
<dbReference type="InterPro" id="IPR041471">
    <property type="entry name" value="UvrB_inter"/>
</dbReference>
<dbReference type="InterPro" id="IPR024759">
    <property type="entry name" value="UvrB_YAD/RRR_dom"/>
</dbReference>
<dbReference type="NCBIfam" id="NF003673">
    <property type="entry name" value="PRK05298.1"/>
    <property type="match status" value="1"/>
</dbReference>
<dbReference type="NCBIfam" id="TIGR00631">
    <property type="entry name" value="uvrb"/>
    <property type="match status" value="1"/>
</dbReference>
<dbReference type="PANTHER" id="PTHR24029">
    <property type="entry name" value="UVRABC SYSTEM PROTEIN B"/>
    <property type="match status" value="1"/>
</dbReference>
<dbReference type="PANTHER" id="PTHR24029:SF0">
    <property type="entry name" value="UVRABC SYSTEM PROTEIN B"/>
    <property type="match status" value="1"/>
</dbReference>
<dbReference type="Pfam" id="PF00271">
    <property type="entry name" value="Helicase_C"/>
    <property type="match status" value="1"/>
</dbReference>
<dbReference type="Pfam" id="PF04851">
    <property type="entry name" value="ResIII"/>
    <property type="match status" value="1"/>
</dbReference>
<dbReference type="Pfam" id="PF02151">
    <property type="entry name" value="UVR"/>
    <property type="match status" value="1"/>
</dbReference>
<dbReference type="Pfam" id="PF12344">
    <property type="entry name" value="UvrB"/>
    <property type="match status" value="1"/>
</dbReference>
<dbReference type="Pfam" id="PF17757">
    <property type="entry name" value="UvrB_inter"/>
    <property type="match status" value="1"/>
</dbReference>
<dbReference type="SMART" id="SM00487">
    <property type="entry name" value="DEXDc"/>
    <property type="match status" value="1"/>
</dbReference>
<dbReference type="SMART" id="SM00490">
    <property type="entry name" value="HELICc"/>
    <property type="match status" value="1"/>
</dbReference>
<dbReference type="SUPFAM" id="SSF46600">
    <property type="entry name" value="C-terminal UvrC-binding domain of UvrB"/>
    <property type="match status" value="1"/>
</dbReference>
<dbReference type="SUPFAM" id="SSF52540">
    <property type="entry name" value="P-loop containing nucleoside triphosphate hydrolases"/>
    <property type="match status" value="2"/>
</dbReference>
<dbReference type="PROSITE" id="PS51192">
    <property type="entry name" value="HELICASE_ATP_BIND_1"/>
    <property type="match status" value="1"/>
</dbReference>
<dbReference type="PROSITE" id="PS51194">
    <property type="entry name" value="HELICASE_CTER"/>
    <property type="match status" value="1"/>
</dbReference>
<dbReference type="PROSITE" id="PS50151">
    <property type="entry name" value="UVR"/>
    <property type="match status" value="1"/>
</dbReference>
<reference key="1">
    <citation type="journal article" date="2010" name="J. Bacteriol.">
        <title>Genome sequence of the deep-rooted Yersinia pestis strain Angola reveals new insights into the evolution and pangenome of the plague bacterium.</title>
        <authorList>
            <person name="Eppinger M."/>
            <person name="Worsham P.L."/>
            <person name="Nikolich M.P."/>
            <person name="Riley D.R."/>
            <person name="Sebastian Y."/>
            <person name="Mou S."/>
            <person name="Achtman M."/>
            <person name="Lindler L.E."/>
            <person name="Ravel J."/>
        </authorList>
    </citation>
    <scope>NUCLEOTIDE SEQUENCE [LARGE SCALE GENOMIC DNA]</scope>
    <source>
        <strain>Angola</strain>
    </source>
</reference>
<accession>A9R3D3</accession>
<gene>
    <name evidence="1" type="primary">uvrB</name>
    <name type="ordered locus">YpAngola_A1430</name>
</gene>
<keyword id="KW-0067">ATP-binding</keyword>
<keyword id="KW-0963">Cytoplasm</keyword>
<keyword id="KW-0227">DNA damage</keyword>
<keyword id="KW-0228">DNA excision</keyword>
<keyword id="KW-0234">DNA repair</keyword>
<keyword id="KW-0267">Excision nuclease</keyword>
<keyword id="KW-0347">Helicase</keyword>
<keyword id="KW-0378">Hydrolase</keyword>
<keyword id="KW-0547">Nucleotide-binding</keyword>
<keyword id="KW-0742">SOS response</keyword>
<organism>
    <name type="scientific">Yersinia pestis bv. Antiqua (strain Angola)</name>
    <dbReference type="NCBI Taxonomy" id="349746"/>
    <lineage>
        <taxon>Bacteria</taxon>
        <taxon>Pseudomonadati</taxon>
        <taxon>Pseudomonadota</taxon>
        <taxon>Gammaproteobacteria</taxon>
        <taxon>Enterobacterales</taxon>
        <taxon>Yersiniaceae</taxon>
        <taxon>Yersinia</taxon>
    </lineage>
</organism>
<comment type="function">
    <text evidence="1">The UvrABC repair system catalyzes the recognition and processing of DNA lesions. A damage recognition complex composed of 2 UvrA and 2 UvrB subunits scans DNA for abnormalities. Upon binding of the UvrA(2)B(2) complex to a putative damaged site, the DNA wraps around one UvrB monomer. DNA wrap is dependent on ATP binding by UvrB and probably causes local melting of the DNA helix, facilitating insertion of UvrB beta-hairpin between the DNA strands. Then UvrB probes one DNA strand for the presence of a lesion. If a lesion is found the UvrA subunits dissociate and the UvrB-DNA preincision complex is formed. This complex is subsequently bound by UvrC and the second UvrB is released. If no lesion is found, the DNA wraps around the other UvrB subunit that will check the other stand for damage.</text>
</comment>
<comment type="subunit">
    <text evidence="1">Forms a heterotetramer with UvrA during the search for lesions. Interacts with UvrC in an incision complex.</text>
</comment>
<comment type="subcellular location">
    <subcellularLocation>
        <location evidence="1">Cytoplasm</location>
    </subcellularLocation>
</comment>
<comment type="domain">
    <text evidence="1">The beta-hairpin motif is involved in DNA binding.</text>
</comment>
<comment type="similarity">
    <text evidence="1">Belongs to the UvrB family.</text>
</comment>
<sequence>MSKSFKLHSVFKPAGDQPEAIRKLEEGLENGLAHQTLLGVTGSGKTFTVANVIADLNRPTMILAPNKTLAAQLYGEMKEFFPDNAVEYFVSYYDYYQPEAYVPSSDTFIEKDASVNEHIEQMRLSATKALLERRDVVVVASVSAIYGLGDPDLYLKMMLHLTRGMIIDQRSILRRLSELQYSRNDQVFQRGTFRVRGEVIDIFPAESDEWALRVELFDEEVERLSIFDPLTGQLQHEVPRFTVYPKTHYVTPRERILQAMEEIKVELAERRQVLLANNKLLEEQRLSQRTQFDLEMMNELGYCSGIENYSRYLSGRGPGEAPPTLFDYLPADGLLIVDESHVTIPQIGGMYKGDRSRKETLVEYGFRLPSALDNRPMRFEEFEALAPQTIYVSATPGKYELEKSGGDIIEQVVRPTGLLDPLIEVRPVATQVDDLLSEIRIRAAINERVLVTTLTKRMAEDLTDYLSEHGAKVRYLHSDIDTVERVEIIRDLRLGEFDVLVGINLLREGLDMPEVSLVAILDADKEGFLRSERSLIQTIGRAARNLNGKAILYGDRITASMEKAIGETERRRAKQQAYNEERRIIPQGLNKKIGDILQLGQPSMRGKGKGRGSHKMADTTQYQSLSPKALDQKIRELEAKMYTYAQNLEFEQAAELRDQVHQLRQQFIAIS</sequence>
<evidence type="ECO:0000255" key="1">
    <source>
        <dbReference type="HAMAP-Rule" id="MF_00204"/>
    </source>
</evidence>
<name>UVRB_YERPG</name>
<protein>
    <recommendedName>
        <fullName evidence="1">UvrABC system protein B</fullName>
        <shortName evidence="1">Protein UvrB</shortName>
    </recommendedName>
    <alternativeName>
        <fullName evidence="1">Excinuclease ABC subunit B</fullName>
    </alternativeName>
</protein>
<proteinExistence type="inferred from homology"/>